<proteinExistence type="evidence at transcript level"/>
<dbReference type="EC" id="2.3.1.225"/>
<dbReference type="EMBL" id="AL021635">
    <property type="protein sequence ID" value="CAA16560.1"/>
    <property type="status" value="ALT_SEQ"/>
    <property type="molecule type" value="Genomic_DNA"/>
</dbReference>
<dbReference type="EMBL" id="AL161557">
    <property type="protein sequence ID" value="CAB79230.1"/>
    <property type="status" value="ALT_SEQ"/>
    <property type="molecule type" value="Genomic_DNA"/>
</dbReference>
<dbReference type="EMBL" id="CP002687">
    <property type="protein sequence ID" value="AEE84651.1"/>
    <property type="molecule type" value="Genomic_DNA"/>
</dbReference>
<dbReference type="EMBL" id="AY035179">
    <property type="protein sequence ID" value="AAK59683.1"/>
    <property type="molecule type" value="mRNA"/>
</dbReference>
<dbReference type="EMBL" id="AY062957">
    <property type="protein sequence ID" value="AAL33803.1"/>
    <property type="molecule type" value="mRNA"/>
</dbReference>
<dbReference type="EMBL" id="AY087777">
    <property type="protein sequence ID" value="AAM65313.1"/>
    <property type="molecule type" value="mRNA"/>
</dbReference>
<dbReference type="PIR" id="T04570">
    <property type="entry name" value="T04570"/>
</dbReference>
<dbReference type="RefSeq" id="NP_567668.1">
    <molecule id="Q94C49-1"/>
    <property type="nucleotide sequence ID" value="NM_118402.3"/>
</dbReference>
<dbReference type="SMR" id="Q94C49"/>
<dbReference type="FunCoup" id="Q94C49">
    <property type="interactions" value="2241"/>
</dbReference>
<dbReference type="STRING" id="3702.Q94C49"/>
<dbReference type="iPTMnet" id="Q94C49"/>
<dbReference type="SwissPalm" id="Q94C49"/>
<dbReference type="PaxDb" id="3702-AT4G22750.2"/>
<dbReference type="ProteomicsDB" id="242347">
    <molecule id="Q94C49-1"/>
</dbReference>
<dbReference type="EnsemblPlants" id="AT4G22750.1">
    <molecule id="Q94C49-1"/>
    <property type="protein sequence ID" value="AT4G22750.1"/>
    <property type="gene ID" value="AT4G22750"/>
</dbReference>
<dbReference type="GeneID" id="828372"/>
<dbReference type="Gramene" id="AT4G22750.1">
    <molecule id="Q94C49-1"/>
    <property type="protein sequence ID" value="AT4G22750.1"/>
    <property type="gene ID" value="AT4G22750"/>
</dbReference>
<dbReference type="KEGG" id="ath:AT4G22750"/>
<dbReference type="Araport" id="AT4G22750"/>
<dbReference type="TAIR" id="AT4G22750">
    <property type="gene designation" value="PAT13"/>
</dbReference>
<dbReference type="eggNOG" id="KOG1315">
    <property type="taxonomic scope" value="Eukaryota"/>
</dbReference>
<dbReference type="HOGENOM" id="CLU_027721_2_1_1"/>
<dbReference type="InParanoid" id="Q94C49"/>
<dbReference type="OMA" id="HIFLTMF"/>
<dbReference type="PhylomeDB" id="Q94C49"/>
<dbReference type="BRENDA" id="2.3.1.225">
    <property type="organism ID" value="399"/>
</dbReference>
<dbReference type="PRO" id="PR:Q94C49"/>
<dbReference type="Proteomes" id="UP000006548">
    <property type="component" value="Chromosome 4"/>
</dbReference>
<dbReference type="ExpressionAtlas" id="Q94C49">
    <property type="expression patterns" value="baseline and differential"/>
</dbReference>
<dbReference type="GO" id="GO:0030659">
    <property type="term" value="C:cytoplasmic vesicle membrane"/>
    <property type="evidence" value="ECO:0007669"/>
    <property type="project" value="UniProtKB-SubCell"/>
</dbReference>
<dbReference type="GO" id="GO:0005886">
    <property type="term" value="C:plasma membrane"/>
    <property type="evidence" value="ECO:0007669"/>
    <property type="project" value="UniProtKB-SubCell"/>
</dbReference>
<dbReference type="GO" id="GO:0019706">
    <property type="term" value="F:protein-cysteine S-palmitoyltransferase activity"/>
    <property type="evidence" value="ECO:0007669"/>
    <property type="project" value="UniProtKB-EC"/>
</dbReference>
<dbReference type="InterPro" id="IPR001594">
    <property type="entry name" value="Palmitoyltrfase_DHHC"/>
</dbReference>
<dbReference type="InterPro" id="IPR039859">
    <property type="entry name" value="PFA4/ZDH16/20/ERF2-like"/>
</dbReference>
<dbReference type="PANTHER" id="PTHR12246">
    <property type="entry name" value="PALMITOYLTRANSFERASE ZDHHC16"/>
    <property type="match status" value="1"/>
</dbReference>
<dbReference type="Pfam" id="PF01529">
    <property type="entry name" value="DHHC"/>
    <property type="match status" value="1"/>
</dbReference>
<dbReference type="PROSITE" id="PS50216">
    <property type="entry name" value="DHHC"/>
    <property type="match status" value="1"/>
</dbReference>
<reference key="1">
    <citation type="journal article" date="1999" name="Nature">
        <title>Sequence and analysis of chromosome 4 of the plant Arabidopsis thaliana.</title>
        <authorList>
            <person name="Mayer K.F.X."/>
            <person name="Schueller C."/>
            <person name="Wambutt R."/>
            <person name="Murphy G."/>
            <person name="Volckaert G."/>
            <person name="Pohl T."/>
            <person name="Duesterhoeft A."/>
            <person name="Stiekema W."/>
            <person name="Entian K.-D."/>
            <person name="Terryn N."/>
            <person name="Harris B."/>
            <person name="Ansorge W."/>
            <person name="Brandt P."/>
            <person name="Grivell L.A."/>
            <person name="Rieger M."/>
            <person name="Weichselgartner M."/>
            <person name="de Simone V."/>
            <person name="Obermaier B."/>
            <person name="Mache R."/>
            <person name="Mueller M."/>
            <person name="Kreis M."/>
            <person name="Delseny M."/>
            <person name="Puigdomenech P."/>
            <person name="Watson M."/>
            <person name="Schmidtheini T."/>
            <person name="Reichert B."/>
            <person name="Portetelle D."/>
            <person name="Perez-Alonso M."/>
            <person name="Boutry M."/>
            <person name="Bancroft I."/>
            <person name="Vos P."/>
            <person name="Hoheisel J."/>
            <person name="Zimmermann W."/>
            <person name="Wedler H."/>
            <person name="Ridley P."/>
            <person name="Langham S.-A."/>
            <person name="McCullagh B."/>
            <person name="Bilham L."/>
            <person name="Robben J."/>
            <person name="van der Schueren J."/>
            <person name="Grymonprez B."/>
            <person name="Chuang Y.-J."/>
            <person name="Vandenbussche F."/>
            <person name="Braeken M."/>
            <person name="Weltjens I."/>
            <person name="Voet M."/>
            <person name="Bastiaens I."/>
            <person name="Aert R."/>
            <person name="Defoor E."/>
            <person name="Weitzenegger T."/>
            <person name="Bothe G."/>
            <person name="Ramsperger U."/>
            <person name="Hilbert H."/>
            <person name="Braun M."/>
            <person name="Holzer E."/>
            <person name="Brandt A."/>
            <person name="Peters S."/>
            <person name="van Staveren M."/>
            <person name="Dirkse W."/>
            <person name="Mooijman P."/>
            <person name="Klein Lankhorst R."/>
            <person name="Rose M."/>
            <person name="Hauf J."/>
            <person name="Koetter P."/>
            <person name="Berneiser S."/>
            <person name="Hempel S."/>
            <person name="Feldpausch M."/>
            <person name="Lamberth S."/>
            <person name="Van den Daele H."/>
            <person name="De Keyser A."/>
            <person name="Buysshaert C."/>
            <person name="Gielen J."/>
            <person name="Villarroel R."/>
            <person name="De Clercq R."/>
            <person name="van Montagu M."/>
            <person name="Rogers J."/>
            <person name="Cronin A."/>
            <person name="Quail M.A."/>
            <person name="Bray-Allen S."/>
            <person name="Clark L."/>
            <person name="Doggett J."/>
            <person name="Hall S."/>
            <person name="Kay M."/>
            <person name="Lennard N."/>
            <person name="McLay K."/>
            <person name="Mayes R."/>
            <person name="Pettett A."/>
            <person name="Rajandream M.A."/>
            <person name="Lyne M."/>
            <person name="Benes V."/>
            <person name="Rechmann S."/>
            <person name="Borkova D."/>
            <person name="Bloecker H."/>
            <person name="Scharfe M."/>
            <person name="Grimm M."/>
            <person name="Loehnert T.-H."/>
            <person name="Dose S."/>
            <person name="de Haan M."/>
            <person name="Maarse A.C."/>
            <person name="Schaefer M."/>
            <person name="Mueller-Auer S."/>
            <person name="Gabel C."/>
            <person name="Fuchs M."/>
            <person name="Fartmann B."/>
            <person name="Granderath K."/>
            <person name="Dauner D."/>
            <person name="Herzl A."/>
            <person name="Neumann S."/>
            <person name="Argiriou A."/>
            <person name="Vitale D."/>
            <person name="Liguori R."/>
            <person name="Piravandi E."/>
            <person name="Massenet O."/>
            <person name="Quigley F."/>
            <person name="Clabauld G."/>
            <person name="Muendlein A."/>
            <person name="Felber R."/>
            <person name="Schnabl S."/>
            <person name="Hiller R."/>
            <person name="Schmidt W."/>
            <person name="Lecharny A."/>
            <person name="Aubourg S."/>
            <person name="Chefdor F."/>
            <person name="Cooke R."/>
            <person name="Berger C."/>
            <person name="Monfort A."/>
            <person name="Casacuberta E."/>
            <person name="Gibbons T."/>
            <person name="Weber N."/>
            <person name="Vandenbol M."/>
            <person name="Bargues M."/>
            <person name="Terol J."/>
            <person name="Torres A."/>
            <person name="Perez-Perez A."/>
            <person name="Purnelle B."/>
            <person name="Bent E."/>
            <person name="Johnson S."/>
            <person name="Tacon D."/>
            <person name="Jesse T."/>
            <person name="Heijnen L."/>
            <person name="Schwarz S."/>
            <person name="Scholler P."/>
            <person name="Heber S."/>
            <person name="Francs P."/>
            <person name="Bielke C."/>
            <person name="Frishman D."/>
            <person name="Haase D."/>
            <person name="Lemcke K."/>
            <person name="Mewes H.-W."/>
            <person name="Stocker S."/>
            <person name="Zaccaria P."/>
            <person name="Bevan M."/>
            <person name="Wilson R.K."/>
            <person name="de la Bastide M."/>
            <person name="Habermann K."/>
            <person name="Parnell L."/>
            <person name="Dedhia N."/>
            <person name="Gnoj L."/>
            <person name="Schutz K."/>
            <person name="Huang E."/>
            <person name="Spiegel L."/>
            <person name="Sekhon M."/>
            <person name="Murray J."/>
            <person name="Sheet P."/>
            <person name="Cordes M."/>
            <person name="Abu-Threideh J."/>
            <person name="Stoneking T."/>
            <person name="Kalicki J."/>
            <person name="Graves T."/>
            <person name="Harmon G."/>
            <person name="Edwards J."/>
            <person name="Latreille P."/>
            <person name="Courtney L."/>
            <person name="Cloud J."/>
            <person name="Abbott A."/>
            <person name="Scott K."/>
            <person name="Johnson D."/>
            <person name="Minx P."/>
            <person name="Bentley D."/>
            <person name="Fulton B."/>
            <person name="Miller N."/>
            <person name="Greco T."/>
            <person name="Kemp K."/>
            <person name="Kramer J."/>
            <person name="Fulton L."/>
            <person name="Mardis E."/>
            <person name="Dante M."/>
            <person name="Pepin K."/>
            <person name="Hillier L.W."/>
            <person name="Nelson J."/>
            <person name="Spieth J."/>
            <person name="Ryan E."/>
            <person name="Andrews S."/>
            <person name="Geisel C."/>
            <person name="Layman D."/>
            <person name="Du H."/>
            <person name="Ali J."/>
            <person name="Berghoff A."/>
            <person name="Jones K."/>
            <person name="Drone K."/>
            <person name="Cotton M."/>
            <person name="Joshu C."/>
            <person name="Antonoiu B."/>
            <person name="Zidanic M."/>
            <person name="Strong C."/>
            <person name="Sun H."/>
            <person name="Lamar B."/>
            <person name="Yordan C."/>
            <person name="Ma P."/>
            <person name="Zhong J."/>
            <person name="Preston R."/>
            <person name="Vil D."/>
            <person name="Shekher M."/>
            <person name="Matero A."/>
            <person name="Shah R."/>
            <person name="Swaby I.K."/>
            <person name="O'Shaughnessy A."/>
            <person name="Rodriguez M."/>
            <person name="Hoffman J."/>
            <person name="Till S."/>
            <person name="Granat S."/>
            <person name="Shohdy N."/>
            <person name="Hasegawa A."/>
            <person name="Hameed A."/>
            <person name="Lodhi M."/>
            <person name="Johnson A."/>
            <person name="Chen E."/>
            <person name="Marra M.A."/>
            <person name="Martienssen R."/>
            <person name="McCombie W.R."/>
        </authorList>
    </citation>
    <scope>NUCLEOTIDE SEQUENCE [LARGE SCALE GENOMIC DNA]</scope>
    <source>
        <strain>cv. Columbia</strain>
    </source>
</reference>
<reference key="2">
    <citation type="journal article" date="2017" name="Plant J.">
        <title>Araport11: a complete reannotation of the Arabidopsis thaliana reference genome.</title>
        <authorList>
            <person name="Cheng C.Y."/>
            <person name="Krishnakumar V."/>
            <person name="Chan A.P."/>
            <person name="Thibaud-Nissen F."/>
            <person name="Schobel S."/>
            <person name="Town C.D."/>
        </authorList>
    </citation>
    <scope>GENOME REANNOTATION</scope>
    <source>
        <strain>cv. Columbia</strain>
    </source>
</reference>
<reference key="3">
    <citation type="journal article" date="2003" name="Science">
        <title>Empirical analysis of transcriptional activity in the Arabidopsis genome.</title>
        <authorList>
            <person name="Yamada K."/>
            <person name="Lim J."/>
            <person name="Dale J.M."/>
            <person name="Chen H."/>
            <person name="Shinn P."/>
            <person name="Palm C.J."/>
            <person name="Southwick A.M."/>
            <person name="Wu H.C."/>
            <person name="Kim C.J."/>
            <person name="Nguyen M."/>
            <person name="Pham P.K."/>
            <person name="Cheuk R.F."/>
            <person name="Karlin-Newmann G."/>
            <person name="Liu S.X."/>
            <person name="Lam B."/>
            <person name="Sakano H."/>
            <person name="Wu T."/>
            <person name="Yu G."/>
            <person name="Miranda M."/>
            <person name="Quach H.L."/>
            <person name="Tripp M."/>
            <person name="Chang C.H."/>
            <person name="Lee J.M."/>
            <person name="Toriumi M.J."/>
            <person name="Chan M.M."/>
            <person name="Tang C.C."/>
            <person name="Onodera C.S."/>
            <person name="Deng J.M."/>
            <person name="Akiyama K."/>
            <person name="Ansari Y."/>
            <person name="Arakawa T."/>
            <person name="Banh J."/>
            <person name="Banno F."/>
            <person name="Bowser L."/>
            <person name="Brooks S.Y."/>
            <person name="Carninci P."/>
            <person name="Chao Q."/>
            <person name="Choy N."/>
            <person name="Enju A."/>
            <person name="Goldsmith A.D."/>
            <person name="Gurjal M."/>
            <person name="Hansen N.F."/>
            <person name="Hayashizaki Y."/>
            <person name="Johnson-Hopson C."/>
            <person name="Hsuan V.W."/>
            <person name="Iida K."/>
            <person name="Karnes M."/>
            <person name="Khan S."/>
            <person name="Koesema E."/>
            <person name="Ishida J."/>
            <person name="Jiang P.X."/>
            <person name="Jones T."/>
            <person name="Kawai J."/>
            <person name="Kamiya A."/>
            <person name="Meyers C."/>
            <person name="Nakajima M."/>
            <person name="Narusaka M."/>
            <person name="Seki M."/>
            <person name="Sakurai T."/>
            <person name="Satou M."/>
            <person name="Tamse R."/>
            <person name="Vaysberg M."/>
            <person name="Wallender E.K."/>
            <person name="Wong C."/>
            <person name="Yamamura Y."/>
            <person name="Yuan S."/>
            <person name="Shinozaki K."/>
            <person name="Davis R.W."/>
            <person name="Theologis A."/>
            <person name="Ecker J.R."/>
        </authorList>
    </citation>
    <scope>NUCLEOTIDE SEQUENCE [LARGE SCALE MRNA]</scope>
    <source>
        <strain>cv. Columbia</strain>
    </source>
</reference>
<reference key="4">
    <citation type="submission" date="2002-03" db="EMBL/GenBank/DDBJ databases">
        <title>Full-length cDNA from Arabidopsis thaliana.</title>
        <authorList>
            <person name="Brover V.V."/>
            <person name="Troukhan M.E."/>
            <person name="Alexandrov N.A."/>
            <person name="Lu Y.-P."/>
            <person name="Flavell R.B."/>
            <person name="Feldmann K.A."/>
        </authorList>
    </citation>
    <scope>NUCLEOTIDE SEQUENCE [LARGE SCALE MRNA]</scope>
</reference>
<reference key="5">
    <citation type="book" date="2007" name="Proceedings of the 18th international conference on Arabidopsis research">
        <title>S-acylation: dynamic control of plant development and sigalling by lipid modification of proteins.</title>
        <authorList>
            <person name="Hemsley P.A."/>
            <person name="Taylor L."/>
            <person name="Grierson C.S."/>
        </authorList>
    </citation>
    <scope>GENE FAMILY</scope>
    <scope>FUNCTION</scope>
</reference>
<reference key="6">
    <citation type="journal article" date="2012" name="Plant Physiol.">
        <title>Genomics and localization of the Arabidopsis DHHC-cysteine-rich domain S-acyltransferase protein family.</title>
        <authorList>
            <person name="Batistic O."/>
        </authorList>
    </citation>
    <scope>SUBCELLULAR LOCATION</scope>
    <scope>GENE FAMILY</scope>
    <scope>NOMENCLATURE</scope>
</reference>
<name>ZDH18_ARATH</name>
<organism>
    <name type="scientific">Arabidopsis thaliana</name>
    <name type="common">Mouse-ear cress</name>
    <dbReference type="NCBI Taxonomy" id="3702"/>
    <lineage>
        <taxon>Eukaryota</taxon>
        <taxon>Viridiplantae</taxon>
        <taxon>Streptophyta</taxon>
        <taxon>Embryophyta</taxon>
        <taxon>Tracheophyta</taxon>
        <taxon>Spermatophyta</taxon>
        <taxon>Magnoliopsida</taxon>
        <taxon>eudicotyledons</taxon>
        <taxon>Gunneridae</taxon>
        <taxon>Pentapetalae</taxon>
        <taxon>rosids</taxon>
        <taxon>malvids</taxon>
        <taxon>Brassicales</taxon>
        <taxon>Brassicaceae</taxon>
        <taxon>Camelineae</taxon>
        <taxon>Arabidopsis</taxon>
    </lineage>
</organism>
<gene>
    <name type="primary">PAT13</name>
    <name type="ordered locus">At4g22750</name>
    <name type="ORF">T12H17.140</name>
    <name type="ORF">T12H17.2</name>
</gene>
<evidence type="ECO:0000250" key="1"/>
<evidence type="ECO:0000255" key="2"/>
<evidence type="ECO:0000255" key="3">
    <source>
        <dbReference type="PROSITE-ProRule" id="PRU00067"/>
    </source>
</evidence>
<evidence type="ECO:0000269" key="4">
    <source ref="5"/>
</evidence>
<evidence type="ECO:0000305" key="5"/>
<protein>
    <recommendedName>
        <fullName>Probable protein S-acyltransferase 13</fullName>
        <ecNumber>2.3.1.225</ecNumber>
    </recommendedName>
    <alternativeName>
        <fullName>Probable palmitoyltransferase At4g22750</fullName>
    </alternativeName>
    <alternativeName>
        <fullName>Zinc finger DHHC domain-containing protein At4g22750</fullName>
    </alternativeName>
</protein>
<keyword id="KW-0012">Acyltransferase</keyword>
<keyword id="KW-0025">Alternative splicing</keyword>
<keyword id="KW-1003">Cell membrane</keyword>
<keyword id="KW-0968">Cytoplasmic vesicle</keyword>
<keyword id="KW-0449">Lipoprotein</keyword>
<keyword id="KW-0472">Membrane</keyword>
<keyword id="KW-0564">Palmitate</keyword>
<keyword id="KW-1185">Reference proteome</keyword>
<keyword id="KW-0808">Transferase</keyword>
<keyword id="KW-0812">Transmembrane</keyword>
<keyword id="KW-1133">Transmembrane helix</keyword>
<feature type="chain" id="PRO_0000363604" description="Probable protein S-acyltransferase 13">
    <location>
        <begin position="1"/>
        <end position="302"/>
    </location>
</feature>
<feature type="transmembrane region" description="Helical" evidence="2">
    <location>
        <begin position="17"/>
        <end position="37"/>
    </location>
</feature>
<feature type="transmembrane region" description="Helical" evidence="2">
    <location>
        <begin position="56"/>
        <end position="76"/>
    </location>
</feature>
<feature type="transmembrane region" description="Helical" evidence="2">
    <location>
        <begin position="166"/>
        <end position="186"/>
    </location>
</feature>
<feature type="transmembrane region" description="Helical" evidence="2">
    <location>
        <begin position="204"/>
        <end position="224"/>
    </location>
</feature>
<feature type="domain" description="DHHC" evidence="3">
    <location>
        <begin position="116"/>
        <end position="166"/>
    </location>
</feature>
<feature type="active site" description="S-palmitoyl cysteine intermediate" evidence="1">
    <location>
        <position position="146"/>
    </location>
</feature>
<feature type="sequence conflict" description="In Ref. 4; AAM65313." evidence="5" ref="4">
    <original>F</original>
    <variation>L</variation>
    <location>
        <position position="59"/>
    </location>
</feature>
<accession>Q94C49</accession>
<accession>O49656</accession>
<accession>Q8LAJ3</accession>
<sequence>MAWNVFKFCTALRALGSIMILIVIGIIGFTYYAVVVVNYGPALLIGGVDSLLSVLVLAFFHFLLIMLLWSYFSVVVTDPGGVPTGWRPELDIEKSEGNQALIGEASVGDSSSHGVRYCRKCNQYKPPRSHHCSVCGRCILKMDHHCVWVVNCVGANNYKSFLLFLFYTFLETTVVAVSLLPIFLVFFSDGDGDITVSPGSLAASFVAFVLNIAFALSVLGFLIMHIMLVARNTTTIEAYEKHTVNWPYNVGRKTNFEQVFGSDKMYWFVPLYTEDDKKKLPALGGLDFTSRSESETEPLQSL</sequence>
<comment type="function">
    <text evidence="1 4">Palmitoyl acyltransferase.</text>
</comment>
<comment type="catalytic activity">
    <reaction>
        <text>L-cysteinyl-[protein] + hexadecanoyl-CoA = S-hexadecanoyl-L-cysteinyl-[protein] + CoA</text>
        <dbReference type="Rhea" id="RHEA:36683"/>
        <dbReference type="Rhea" id="RHEA-COMP:10131"/>
        <dbReference type="Rhea" id="RHEA-COMP:11032"/>
        <dbReference type="ChEBI" id="CHEBI:29950"/>
        <dbReference type="ChEBI" id="CHEBI:57287"/>
        <dbReference type="ChEBI" id="CHEBI:57379"/>
        <dbReference type="ChEBI" id="CHEBI:74151"/>
        <dbReference type="EC" id="2.3.1.225"/>
    </reaction>
</comment>
<comment type="subcellular location">
    <subcellularLocation>
        <location evidence="5">Cell membrane</location>
        <topology evidence="5">Multi-pass membrane protein</topology>
    </subcellularLocation>
    <subcellularLocation>
        <location evidence="5">Cytoplasmic vesicle membrane</location>
        <topology evidence="5">Multi-pass membrane protein</topology>
    </subcellularLocation>
</comment>
<comment type="alternative products">
    <event type="alternative splicing"/>
    <isoform>
        <id>Q94C49-1</id>
        <name>1</name>
        <sequence type="displayed"/>
    </isoform>
    <text>A number of isoforms are produced. According to EST sequences.</text>
</comment>
<comment type="domain">
    <text evidence="1">The DHHC domain is required for palmitoyltransferase activity.</text>
</comment>
<comment type="similarity">
    <text evidence="5">Belongs to the DHHC palmitoyltransferase family.</text>
</comment>
<comment type="sequence caution" evidence="5">
    <conflict type="erroneous gene model prediction">
        <sequence resource="EMBL-CDS" id="CAA16560"/>
    </conflict>
</comment>
<comment type="sequence caution" evidence="5">
    <conflict type="erroneous gene model prediction">
        <sequence resource="EMBL-CDS" id="CAB79230"/>
    </conflict>
</comment>